<sequence>MSNHTHHPKFKTLKRAWKASKYFIVGLSCLYKFNLKSLVQTALTTLAMITLTSLVITAIIYISVGNAKAKPTSKPTTQQTQQLQNHTPPPLTEHNYKSTHTSIQSTTLSQPPNIDTTSGTTYGHPTNRTQNRKIKSQSTPLATRKPPINPLGSNPPENHQDHNNSQTLPHVPCSTCEGNPACSPLCQIELERAPSSAPTITLKKAPKPKTTKKPTKTTIYHRTSPEAKLQTKKIMVTPQQGILSSPEHQTNQSTTQISQHTSI</sequence>
<proteinExistence type="evidence at transcript level"/>
<evidence type="ECO:0000250" key="1">
    <source>
        <dbReference type="UniProtKB" id="P03423"/>
    </source>
</evidence>
<evidence type="ECO:0000250" key="2">
    <source>
        <dbReference type="UniProtKB" id="P20895"/>
    </source>
</evidence>
<evidence type="ECO:0000255" key="3"/>
<evidence type="ECO:0000256" key="4">
    <source>
        <dbReference type="SAM" id="MobiDB-lite"/>
    </source>
</evidence>
<evidence type="ECO:0000305" key="5"/>
<keyword id="KW-0024">Alternative initiation</keyword>
<keyword id="KW-1015">Disulfide bond</keyword>
<keyword id="KW-0325">Glycoprotein</keyword>
<keyword id="KW-1032">Host cell membrane</keyword>
<keyword id="KW-1043">Host membrane</keyword>
<keyword id="KW-0945">Host-virus interaction</keyword>
<keyword id="KW-0472">Membrane</keyword>
<keyword id="KW-0964">Secreted</keyword>
<keyword id="KW-0812">Transmembrane</keyword>
<keyword id="KW-1133">Transmembrane helix</keyword>
<keyword id="KW-1161">Viral attachment to host cell</keyword>
<keyword id="KW-0899">Viral immunoevasion</keyword>
<keyword id="KW-0946">Virion</keyword>
<keyword id="KW-1160">Virus entry into host cell</keyword>
<name>GLYC_BRSV4</name>
<organism>
    <name type="scientific">Bovine respiratory syncytial virus (strain 4642)</name>
    <name type="common">BRS</name>
    <dbReference type="NCBI Taxonomy" id="82820"/>
    <lineage>
        <taxon>Viruses</taxon>
        <taxon>Riboviria</taxon>
        <taxon>Orthornavirae</taxon>
        <taxon>Negarnaviricota</taxon>
        <taxon>Haploviricotina</taxon>
        <taxon>Monjiviricetes</taxon>
        <taxon>Mononegavirales</taxon>
        <taxon>Pneumoviridae</taxon>
        <taxon>Orthopneumovirus</taxon>
        <taxon>Orthopneumovirus bovis</taxon>
    </lineage>
</organism>
<organismHost>
    <name type="scientific">Bos taurus</name>
    <name type="common">Bovine</name>
    <dbReference type="NCBI Taxonomy" id="9913"/>
</organismHost>
<dbReference type="EMBL" id="Y08718">
    <property type="protein sequence ID" value="CAA69968.1"/>
    <property type="molecule type" value="mRNA"/>
</dbReference>
<dbReference type="SMR" id="O10684"/>
<dbReference type="GlyCosmos" id="O10684">
    <property type="glycosylation" value="13 sites, No reported glycans"/>
</dbReference>
<dbReference type="GO" id="GO:0005576">
    <property type="term" value="C:extracellular region"/>
    <property type="evidence" value="ECO:0007669"/>
    <property type="project" value="UniProtKB-SubCell"/>
</dbReference>
<dbReference type="GO" id="GO:0020002">
    <property type="term" value="C:host cell plasma membrane"/>
    <property type="evidence" value="ECO:0007669"/>
    <property type="project" value="UniProtKB-SubCell"/>
</dbReference>
<dbReference type="GO" id="GO:0016020">
    <property type="term" value="C:membrane"/>
    <property type="evidence" value="ECO:0007669"/>
    <property type="project" value="UniProtKB-KW"/>
</dbReference>
<dbReference type="GO" id="GO:0055036">
    <property type="term" value="C:virion membrane"/>
    <property type="evidence" value="ECO:0007669"/>
    <property type="project" value="UniProtKB-SubCell"/>
</dbReference>
<dbReference type="GO" id="GO:0046718">
    <property type="term" value="P:symbiont entry into host cell"/>
    <property type="evidence" value="ECO:0007669"/>
    <property type="project" value="UniProtKB-KW"/>
</dbReference>
<dbReference type="GO" id="GO:0019062">
    <property type="term" value="P:virion attachment to host cell"/>
    <property type="evidence" value="ECO:0007669"/>
    <property type="project" value="UniProtKB-KW"/>
</dbReference>
<dbReference type="InterPro" id="IPR000925">
    <property type="entry name" value="G_prot"/>
</dbReference>
<dbReference type="Pfam" id="PF00802">
    <property type="entry name" value="Glycoprotein_G"/>
    <property type="match status" value="1"/>
</dbReference>
<comment type="function">
    <molecule>Isoform Membrane-bound glycoprotein G</molecule>
    <text evidence="1">Attaches the virion to the host cell membrane by interacting with heparan sulfate, initiating the infection. Unlike the other paramyxovirus attachment proteins, lacks both neuraminidase and hemagglutinating activities.</text>
</comment>
<comment type="function">
    <molecule>Isoform Secreted glycoprotein G</molecule>
    <text evidence="1">Helps the virus escape antibody-dependent restriction of replication by acting as an antigen decoy and by modulating the activity of leukocytes bearing Fc-gamma receptors.</text>
</comment>
<comment type="subunit">
    <molecule>Isoform Membrane-bound glycoprotein G</molecule>
    <text evidence="1">Homooligomer. Interacts (via N-terminus) with protein M. Part of a complex composed of F1, F2 and G glycoproteins. Interacts with protein SH. Interacts with host heparate sulfate; this interaction probably participates in the viral attachment to the host cell.</text>
</comment>
<comment type="subcellular location">
    <molecule>Isoform Membrane-bound glycoprotein G</molecule>
    <subcellularLocation>
        <location evidence="1">Virion membrane</location>
        <topology evidence="1">Single-pass type II membrane protein</topology>
    </subcellularLocation>
    <subcellularLocation>
        <location evidence="1">Host cell membrane</location>
        <topology evidence="1">Single-pass type II membrane protein</topology>
    </subcellularLocation>
</comment>
<comment type="subcellular location">
    <molecule>Isoform Secreted glycoprotein G</molecule>
    <subcellularLocation>
        <location evidence="2">Secreted</location>
    </subcellularLocation>
    <text evidence="2">The protein is shed from infected cells before the appearance of progeny virus. The initiation at the downstream methionine removes a portion of the transmembrane domain. The remaining hydrophobic portion of the sG protein is essential for translocating it into the lumen of the ER during translation and would likely maintain its membrane association until a proteolytic event releases the mature sG protein into the medium.</text>
</comment>
<comment type="alternative products">
    <event type="alternative initiation"/>
    <isoform>
        <id>O10684-1</id>
        <name>Membrane-bound glycoprotein G</name>
        <sequence type="displayed"/>
    </isoform>
    <isoform>
        <id>O10684-2</id>
        <name>Secreted glycoprotein G</name>
        <sequence type="described" ref="VSP_036512"/>
    </isoform>
</comment>
<comment type="domain">
    <molecule>Isoform Membrane-bound glycoprotein G</molecule>
    <text evidence="1">Contains a linear heparin binding domain essential for virus attachment to the host.</text>
</comment>
<comment type="PTM">
    <molecule>Isoform Secreted glycoprotein G</molecule>
    <text evidence="2">Cleaved to give rise to the mature sG protein which lacks the transmembrane domain.</text>
</comment>
<comment type="PTM">
    <molecule>Isoform Membrane-bound glycoprotein G</molecule>
    <text evidence="1">N- and O-glycosylated. May carry 30-40 separate O-linked carbohydrate chains distributed among the serine and threonine residues.</text>
</comment>
<comment type="PTM">
    <molecule>Isoform Membrane-bound glycoprotein G</molecule>
    <text evidence="1">Palmitoylated.</text>
</comment>
<comment type="similarity">
    <text evidence="5">Belongs to the pneumoviruses glycoprotein G family.</text>
</comment>
<feature type="chain" id="PRO_0000142844" description="Major surface glycoprotein G">
    <location>
        <begin position="1"/>
        <end position="263"/>
    </location>
</feature>
<feature type="chain" id="PRO_0000451313" description="Mature secreted glycoprotein G">
    <location>
        <begin position="66"/>
        <end position="263"/>
    </location>
</feature>
<feature type="topological domain" description="Cytoplasmic" evidence="3">
    <location>
        <begin position="1"/>
        <end position="37"/>
    </location>
</feature>
<feature type="transmembrane region" description="Helical" evidence="3">
    <location>
        <begin position="38"/>
        <end position="66"/>
    </location>
</feature>
<feature type="topological domain" description="Extracellular" evidence="3">
    <location>
        <begin position="67"/>
        <end position="263"/>
    </location>
</feature>
<feature type="region of interest" description="Disordered" evidence="4">
    <location>
        <begin position="69"/>
        <end position="166"/>
    </location>
</feature>
<feature type="region of interest" description="Binding to host heparan sulfate" evidence="1">
    <location>
        <begin position="187"/>
        <end position="198"/>
    </location>
</feature>
<feature type="region of interest" description="Disordered" evidence="4">
    <location>
        <begin position="197"/>
        <end position="218"/>
    </location>
</feature>
<feature type="region of interest" description="Disordered" evidence="4">
    <location>
        <begin position="244"/>
        <end position="263"/>
    </location>
</feature>
<feature type="compositionally biased region" description="Low complexity" evidence="4">
    <location>
        <begin position="72"/>
        <end position="86"/>
    </location>
</feature>
<feature type="compositionally biased region" description="Polar residues" evidence="4">
    <location>
        <begin position="98"/>
        <end position="129"/>
    </location>
</feature>
<feature type="compositionally biased region" description="Polar residues" evidence="4">
    <location>
        <begin position="151"/>
        <end position="166"/>
    </location>
</feature>
<feature type="compositionally biased region" description="Basic residues" evidence="4">
    <location>
        <begin position="204"/>
        <end position="215"/>
    </location>
</feature>
<feature type="site" description="Cleavage" evidence="1">
    <location>
        <begin position="65"/>
        <end position="66"/>
    </location>
</feature>
<feature type="glycosylation site" description="O-linked (GalNAc...) threonine; by host" evidence="1">
    <location>
        <position position="72"/>
    </location>
</feature>
<feature type="glycosylation site" description="O-linked (GalNAc...) threonine; by host" evidence="1">
    <location>
        <position position="80"/>
    </location>
</feature>
<feature type="glycosylation site" description="O-linked (GalNAc...) threonine; by host" evidence="1">
    <location>
        <position position="87"/>
    </location>
</feature>
<feature type="glycosylation site" description="O-linked (GalNAc...) threonine; by host" evidence="1">
    <location>
        <position position="92"/>
    </location>
</feature>
<feature type="glycosylation site" description="O-linked (GalNAc...) serine; by host" evidence="3">
    <location>
        <position position="105"/>
    </location>
</feature>
<feature type="glycosylation site" description="N-linked (GlcNAc...) asparagine; by host" evidence="3">
    <location>
        <position position="127"/>
    </location>
</feature>
<feature type="glycosylation site" description="O-linked (GalNAc...) threonine; by host" evidence="3">
    <location>
        <position position="139"/>
    </location>
</feature>
<feature type="glycosylation site" description="N-linked (GlcNAc...) asparagine; by host" evidence="3">
    <location>
        <position position="163"/>
    </location>
</feature>
<feature type="glycosylation site" description="O-linked (GalNAc...) threonine; by host" evidence="3">
    <location>
        <position position="199"/>
    </location>
</feature>
<feature type="glycosylation site" description="O-linked (GalNAc...) threonine; by host" evidence="3">
    <location>
        <position position="215"/>
    </location>
</feature>
<feature type="glycosylation site" description="O-linked (GalNAc...) threonine; by host" evidence="3">
    <location>
        <position position="231"/>
    </location>
</feature>
<feature type="glycosylation site" description="N-linked (GlcNAc...) asparagine; by host" evidence="3">
    <location>
        <position position="251"/>
    </location>
</feature>
<feature type="glycosylation site" description="O-linked (GalNAc...) serine; by host" evidence="3">
    <location>
        <position position="253"/>
    </location>
</feature>
<feature type="disulfide bond" evidence="1">
    <location>
        <begin position="173"/>
        <end position="186"/>
    </location>
</feature>
<feature type="disulfide bond" evidence="1">
    <location>
        <begin position="176"/>
        <end position="182"/>
    </location>
</feature>
<feature type="splice variant" id="VSP_036512" description="In isoform Secreted glycoprotein G." evidence="1">
    <location>
        <begin position="1"/>
        <end position="47"/>
    </location>
</feature>
<reference key="1">
    <citation type="journal article" date="1997" name="Virology">
        <title>Antigenically distinct G glycoproteins of BRSV strains share a high degree of genetic homogeneity.</title>
        <authorList>
            <person name="Furze J."/>
            <person name="Roberts S."/>
            <person name="Wertz G."/>
            <person name="Taylor G."/>
        </authorList>
    </citation>
    <scope>NUCLEOTIDE SEQUENCE [MRNA]</scope>
</reference>
<accession>O10684</accession>
<gene>
    <name type="primary">G</name>
</gene>
<protein>
    <recommendedName>
        <fullName>Major surface glycoprotein G</fullName>
    </recommendedName>
    <alternativeName>
        <fullName>Attachment glycoprotein G</fullName>
    </alternativeName>
    <alternativeName>
        <fullName>Membrane-bound glycoprotein</fullName>
        <shortName>mG</shortName>
    </alternativeName>
    <component>
        <recommendedName>
            <fullName evidence="2">Mature secreted glycoprotein G</fullName>
            <shortName evidence="2">Mature sG</shortName>
        </recommendedName>
    </component>
</protein>